<feature type="chain" id="PRO_0000090256" description="Triosephosphate isomerase">
    <location>
        <begin position="1"/>
        <end position="261"/>
    </location>
</feature>
<feature type="active site" description="Electrophile" evidence="1 7 8">
    <location>
        <position position="100"/>
    </location>
</feature>
<feature type="active site" description="Proton acceptor" evidence="1 8">
    <location>
        <position position="172"/>
    </location>
</feature>
<feature type="binding site" evidence="1 3 4">
    <location>
        <begin position="10"/>
        <end position="12"/>
    </location>
    <ligand>
        <name>substrate</name>
    </ligand>
</feature>
<feature type="binding site" evidence="1 3">
    <location>
        <position position="178"/>
    </location>
    <ligand>
        <name>substrate</name>
    </ligand>
</feature>
<feature type="binding site" evidence="1 3">
    <location>
        <position position="218"/>
    </location>
    <ligand>
        <name>substrate</name>
    </ligand>
</feature>
<feature type="binding site" evidence="1 3">
    <location>
        <begin position="239"/>
        <end position="240"/>
    </location>
    <ligand>
        <name>substrate</name>
    </ligand>
</feature>
<feature type="strand" evidence="9">
    <location>
        <begin position="6"/>
        <end position="10"/>
    </location>
</feature>
<feature type="helix" evidence="9">
    <location>
        <begin position="17"/>
        <end position="30"/>
    </location>
</feature>
<feature type="helix" evidence="9">
    <location>
        <begin position="33"/>
        <end position="37"/>
    </location>
</feature>
<feature type="strand" evidence="9">
    <location>
        <begin position="40"/>
        <end position="44"/>
    </location>
</feature>
<feature type="helix" evidence="9">
    <location>
        <begin position="47"/>
        <end position="49"/>
    </location>
</feature>
<feature type="helix" evidence="9">
    <location>
        <begin position="50"/>
        <end position="59"/>
    </location>
</feature>
<feature type="strand" evidence="9">
    <location>
        <begin position="65"/>
        <end position="69"/>
    </location>
</feature>
<feature type="strand" evidence="9">
    <location>
        <begin position="73"/>
        <end position="78"/>
    </location>
</feature>
<feature type="helix" evidence="9">
    <location>
        <begin position="85"/>
        <end position="90"/>
    </location>
</feature>
<feature type="strand" evidence="9">
    <location>
        <begin position="95"/>
        <end position="99"/>
    </location>
</feature>
<feature type="helix" evidence="9">
    <location>
        <begin position="101"/>
        <end position="106"/>
    </location>
</feature>
<feature type="helix" evidence="9">
    <location>
        <begin position="111"/>
        <end position="123"/>
    </location>
</feature>
<feature type="strand" evidence="9">
    <location>
        <begin position="127"/>
        <end position="132"/>
    </location>
</feature>
<feature type="helix" evidence="9">
    <location>
        <begin position="136"/>
        <end position="140"/>
    </location>
</feature>
<feature type="helix" evidence="9">
    <location>
        <begin position="144"/>
        <end position="155"/>
    </location>
</feature>
<feature type="turn" evidence="9">
    <location>
        <begin position="156"/>
        <end position="158"/>
    </location>
</feature>
<feature type="helix" evidence="9">
    <location>
        <begin position="161"/>
        <end position="164"/>
    </location>
</feature>
<feature type="strand" evidence="9">
    <location>
        <begin position="168"/>
        <end position="171"/>
    </location>
</feature>
<feature type="helix" evidence="9">
    <location>
        <begin position="174"/>
        <end position="176"/>
    </location>
</feature>
<feature type="strand" evidence="9">
    <location>
        <begin position="177"/>
        <end position="180"/>
    </location>
</feature>
<feature type="helix" evidence="9">
    <location>
        <begin position="185"/>
        <end position="202"/>
    </location>
</feature>
<feature type="helix" evidence="9">
    <location>
        <begin position="205"/>
        <end position="208"/>
    </location>
</feature>
<feature type="strand" evidence="9">
    <location>
        <begin position="213"/>
        <end position="215"/>
    </location>
</feature>
<feature type="turn" evidence="9">
    <location>
        <begin position="221"/>
        <end position="223"/>
    </location>
</feature>
<feature type="helix" evidence="9">
    <location>
        <begin position="224"/>
        <end position="228"/>
    </location>
</feature>
<feature type="strand" evidence="9">
    <location>
        <begin position="235"/>
        <end position="238"/>
    </location>
</feature>
<feature type="helix" evidence="9">
    <location>
        <begin position="240"/>
        <end position="243"/>
    </location>
</feature>
<feature type="helix" evidence="9">
    <location>
        <begin position="245"/>
        <end position="256"/>
    </location>
</feature>
<reference key="1">
    <citation type="journal article" date="1998" name="Nature">
        <title>Deciphering the biology of Mycobacterium tuberculosis from the complete genome sequence.</title>
        <authorList>
            <person name="Cole S.T."/>
            <person name="Brosch R."/>
            <person name="Parkhill J."/>
            <person name="Garnier T."/>
            <person name="Churcher C.M."/>
            <person name="Harris D.E."/>
            <person name="Gordon S.V."/>
            <person name="Eiglmeier K."/>
            <person name="Gas S."/>
            <person name="Barry C.E. III"/>
            <person name="Tekaia F."/>
            <person name="Badcock K."/>
            <person name="Basham D."/>
            <person name="Brown D."/>
            <person name="Chillingworth T."/>
            <person name="Connor R."/>
            <person name="Davies R.M."/>
            <person name="Devlin K."/>
            <person name="Feltwell T."/>
            <person name="Gentles S."/>
            <person name="Hamlin N."/>
            <person name="Holroyd S."/>
            <person name="Hornsby T."/>
            <person name="Jagels K."/>
            <person name="Krogh A."/>
            <person name="McLean J."/>
            <person name="Moule S."/>
            <person name="Murphy L.D."/>
            <person name="Oliver S."/>
            <person name="Osborne J."/>
            <person name="Quail M.A."/>
            <person name="Rajandream M.A."/>
            <person name="Rogers J."/>
            <person name="Rutter S."/>
            <person name="Seeger K."/>
            <person name="Skelton S."/>
            <person name="Squares S."/>
            <person name="Squares R."/>
            <person name="Sulston J.E."/>
            <person name="Taylor K."/>
            <person name="Whitehead S."/>
            <person name="Barrell B.G."/>
        </authorList>
    </citation>
    <scope>NUCLEOTIDE SEQUENCE [LARGE SCALE GENOMIC DNA]</scope>
    <source>
        <strain>ATCC 25618 / H37Rv</strain>
    </source>
</reference>
<reference key="2">
    <citation type="journal article" date="2006" name="FEMS Microbiol. Lett.">
        <title>Biochemical and functional characterization of triosephosphate isomerase from Mycobacterium tuberculosis H37Rv.</title>
        <authorList>
            <person name="Mathur D."/>
            <person name="Malik G."/>
            <person name="Garg L.C."/>
        </authorList>
    </citation>
    <scope>FUNCTION</scope>
    <scope>CATALYTIC ACTIVITY</scope>
    <scope>BIOPHYSICOCHEMICAL PROPERTIES</scope>
    <scope>MASS SPECTROMETRY</scope>
    <scope>SUBUNIT</scope>
</reference>
<reference key="3">
    <citation type="journal article" date="2011" name="Mol. Cell. Proteomics">
        <title>Proteogenomic analysis of Mycobacterium tuberculosis by high resolution mass spectrometry.</title>
        <authorList>
            <person name="Kelkar D.S."/>
            <person name="Kumar D."/>
            <person name="Kumar P."/>
            <person name="Balakrishnan L."/>
            <person name="Muthusamy B."/>
            <person name="Yadav A.K."/>
            <person name="Shrivastava P."/>
            <person name="Marimuthu A."/>
            <person name="Anand S."/>
            <person name="Sundaram H."/>
            <person name="Kingsbury R."/>
            <person name="Harsha H.C."/>
            <person name="Nair B."/>
            <person name="Prasad T.S."/>
            <person name="Chauhan D.S."/>
            <person name="Katoch K."/>
            <person name="Katoch V.M."/>
            <person name="Kumar P."/>
            <person name="Chaerkady R."/>
            <person name="Ramachandran S."/>
            <person name="Dash D."/>
            <person name="Pandey A."/>
        </authorList>
    </citation>
    <scope>IDENTIFICATION BY MASS SPECTROMETRY [LARGE SCALE ANALYSIS]</scope>
    <source>
        <strain>ATCC 25618 / H37Rv</strain>
    </source>
</reference>
<reference key="4">
    <citation type="journal article" date="2011" name="Acta Crystallogr. D">
        <title>Structural and functional characterization of Mycobacterium tuberculosis triosephosphate isomerase.</title>
        <authorList>
            <person name="Connor S.E."/>
            <person name="Capodagli G.C."/>
            <person name="Deaton M.K."/>
            <person name="Pegan S.D."/>
        </authorList>
    </citation>
    <scope>X-RAY CRYSTALLOGRAPHY (1.41 ANGSTROMS) IN COMPLEX WITH SUBSTRATE ANALOG</scope>
    <scope>FUNCTION</scope>
    <scope>CATALYTIC ACTIVITY</scope>
    <scope>BIOPHYSICOCHEMICAL PROPERTIES</scope>
    <scope>SUBUNIT</scope>
</reference>
<reference key="5">
    <citation type="journal article" date="2015" name="Tuberculosis">
        <title>Increasing the structural coverage of tuberculosis drug targets.</title>
        <authorList>
            <person name="Baugh L."/>
            <person name="Phan I."/>
            <person name="Begley D.W."/>
            <person name="Clifton M.C."/>
            <person name="Armour B."/>
            <person name="Dranow D.M."/>
            <person name="Taylor B.M."/>
            <person name="Muruthi M.M."/>
            <person name="Abendroth J."/>
            <person name="Fairman J.W."/>
            <person name="Fox D. III"/>
            <person name="Dieterich S.H."/>
            <person name="Staker B.L."/>
            <person name="Gardberg A.S."/>
            <person name="Choi R."/>
            <person name="Hewitt S.N."/>
            <person name="Napuli A.J."/>
            <person name="Myers J."/>
            <person name="Barrett L.K."/>
            <person name="Zhang Y."/>
            <person name="Ferrell M."/>
            <person name="Mundt E."/>
            <person name="Thompkins K."/>
            <person name="Tran N."/>
            <person name="Lyons-Abbott S."/>
            <person name="Abramov A."/>
            <person name="Sekar A."/>
            <person name="Serbzhinskiy D."/>
            <person name="Lorimer D."/>
            <person name="Buchko G.W."/>
            <person name="Stacy R."/>
            <person name="Stewart L.J."/>
            <person name="Edwards T.E."/>
            <person name="Van Voorhis W.C."/>
            <person name="Myler P.J."/>
        </authorList>
    </citation>
    <scope>X-RAY CRYSTALLOGRAPHY (1.55 ANGSTROMS) OF 2-261 IN COMPLEX WITH SUBSTRATE ANALOG</scope>
    <scope>SUBUNIT</scope>
</reference>
<dbReference type="EC" id="5.3.1.1" evidence="1 2 3"/>
<dbReference type="EMBL" id="AL123456">
    <property type="protein sequence ID" value="CCP44197.1"/>
    <property type="molecule type" value="Genomic_DNA"/>
</dbReference>
<dbReference type="PIR" id="A70916">
    <property type="entry name" value="A70916"/>
</dbReference>
<dbReference type="RefSeq" id="NP_215954.1">
    <property type="nucleotide sequence ID" value="NC_000962.3"/>
</dbReference>
<dbReference type="RefSeq" id="WP_003407398.1">
    <property type="nucleotide sequence ID" value="NZ_NVQJ01000038.1"/>
</dbReference>
<dbReference type="PDB" id="3GVG">
    <property type="method" value="X-ray"/>
    <property type="resolution" value="1.55 A"/>
    <property type="chains" value="A/B=2-261"/>
</dbReference>
<dbReference type="PDB" id="3TA6">
    <property type="method" value="X-ray"/>
    <property type="resolution" value="1.41 A"/>
    <property type="chains" value="A/B=1-261"/>
</dbReference>
<dbReference type="PDB" id="3TAO">
    <property type="method" value="X-ray"/>
    <property type="resolution" value="1.45 A"/>
    <property type="chains" value="A/B=1-261"/>
</dbReference>
<dbReference type="PDBsum" id="3GVG"/>
<dbReference type="PDBsum" id="3TA6"/>
<dbReference type="PDBsum" id="3TAO"/>
<dbReference type="SMR" id="P9WG43"/>
<dbReference type="FunCoup" id="P9WG43">
    <property type="interactions" value="511"/>
</dbReference>
<dbReference type="STRING" id="83332.Rv1438"/>
<dbReference type="PaxDb" id="83332-Rv1438"/>
<dbReference type="DNASU" id="886628"/>
<dbReference type="GeneID" id="886628"/>
<dbReference type="KEGG" id="mtu:Rv1438"/>
<dbReference type="KEGG" id="mtv:RVBD_1438"/>
<dbReference type="TubercuList" id="Rv1438"/>
<dbReference type="eggNOG" id="COG0149">
    <property type="taxonomic scope" value="Bacteria"/>
</dbReference>
<dbReference type="InParanoid" id="P9WG43"/>
<dbReference type="OrthoDB" id="9809429at2"/>
<dbReference type="PhylomeDB" id="P9WG43"/>
<dbReference type="BRENDA" id="5.3.1.1">
    <property type="organism ID" value="3445"/>
</dbReference>
<dbReference type="UniPathway" id="UPA00109">
    <property type="reaction ID" value="UER00189"/>
</dbReference>
<dbReference type="UniPathway" id="UPA00138"/>
<dbReference type="EvolutionaryTrace" id="P9WG43"/>
<dbReference type="Proteomes" id="UP000001584">
    <property type="component" value="Chromosome"/>
</dbReference>
<dbReference type="GO" id="GO:0005829">
    <property type="term" value="C:cytosol"/>
    <property type="evidence" value="ECO:0007005"/>
    <property type="project" value="MTBBASE"/>
</dbReference>
<dbReference type="GO" id="GO:0005576">
    <property type="term" value="C:extracellular region"/>
    <property type="evidence" value="ECO:0007005"/>
    <property type="project" value="MTBBASE"/>
</dbReference>
<dbReference type="GO" id="GO:0005886">
    <property type="term" value="C:plasma membrane"/>
    <property type="evidence" value="ECO:0007005"/>
    <property type="project" value="MTBBASE"/>
</dbReference>
<dbReference type="GO" id="GO:0004807">
    <property type="term" value="F:triose-phosphate isomerase activity"/>
    <property type="evidence" value="ECO:0000314"/>
    <property type="project" value="MTBBASE"/>
</dbReference>
<dbReference type="GO" id="GO:0006094">
    <property type="term" value="P:gluconeogenesis"/>
    <property type="evidence" value="ECO:0000314"/>
    <property type="project" value="MTBBASE"/>
</dbReference>
<dbReference type="GO" id="GO:0046166">
    <property type="term" value="P:glyceraldehyde-3-phosphate biosynthetic process"/>
    <property type="evidence" value="ECO:0000318"/>
    <property type="project" value="GO_Central"/>
</dbReference>
<dbReference type="GO" id="GO:0019563">
    <property type="term" value="P:glycerol catabolic process"/>
    <property type="evidence" value="ECO:0000318"/>
    <property type="project" value="GO_Central"/>
</dbReference>
<dbReference type="GO" id="GO:0006096">
    <property type="term" value="P:glycolytic process"/>
    <property type="evidence" value="ECO:0000314"/>
    <property type="project" value="MTBBASE"/>
</dbReference>
<dbReference type="CDD" id="cd00311">
    <property type="entry name" value="TIM"/>
    <property type="match status" value="1"/>
</dbReference>
<dbReference type="FunFam" id="3.20.20.70:FF:000020">
    <property type="entry name" value="Triosephosphate isomerase"/>
    <property type="match status" value="1"/>
</dbReference>
<dbReference type="Gene3D" id="3.20.20.70">
    <property type="entry name" value="Aldolase class I"/>
    <property type="match status" value="1"/>
</dbReference>
<dbReference type="HAMAP" id="MF_00147_B">
    <property type="entry name" value="TIM_B"/>
    <property type="match status" value="1"/>
</dbReference>
<dbReference type="InterPro" id="IPR013785">
    <property type="entry name" value="Aldolase_TIM"/>
</dbReference>
<dbReference type="InterPro" id="IPR035990">
    <property type="entry name" value="TIM_sf"/>
</dbReference>
<dbReference type="InterPro" id="IPR022896">
    <property type="entry name" value="TrioseP_Isoase_bac/euk"/>
</dbReference>
<dbReference type="InterPro" id="IPR000652">
    <property type="entry name" value="Triosephosphate_isomerase"/>
</dbReference>
<dbReference type="InterPro" id="IPR020861">
    <property type="entry name" value="Triosephosphate_isomerase_AS"/>
</dbReference>
<dbReference type="NCBIfam" id="TIGR00419">
    <property type="entry name" value="tim"/>
    <property type="match status" value="1"/>
</dbReference>
<dbReference type="PANTHER" id="PTHR21139">
    <property type="entry name" value="TRIOSEPHOSPHATE ISOMERASE"/>
    <property type="match status" value="1"/>
</dbReference>
<dbReference type="PANTHER" id="PTHR21139:SF42">
    <property type="entry name" value="TRIOSEPHOSPHATE ISOMERASE"/>
    <property type="match status" value="1"/>
</dbReference>
<dbReference type="Pfam" id="PF00121">
    <property type="entry name" value="TIM"/>
    <property type="match status" value="1"/>
</dbReference>
<dbReference type="SUPFAM" id="SSF51351">
    <property type="entry name" value="Triosephosphate isomerase (TIM)"/>
    <property type="match status" value="1"/>
</dbReference>
<dbReference type="PROSITE" id="PS00171">
    <property type="entry name" value="TIM_1"/>
    <property type="match status" value="1"/>
</dbReference>
<dbReference type="PROSITE" id="PS51440">
    <property type="entry name" value="TIM_2"/>
    <property type="match status" value="1"/>
</dbReference>
<comment type="function">
    <text evidence="1 2 3">Involved in the gluconeogenesis. Catalyzes stereospecifically the conversion of dihydroxyacetone phosphate (DHAP) to D-glyceraldehyde-3-phosphate (G3P).</text>
</comment>
<comment type="catalytic activity">
    <reaction evidence="1 2 3">
        <text>D-glyceraldehyde 3-phosphate = dihydroxyacetone phosphate</text>
        <dbReference type="Rhea" id="RHEA:18585"/>
        <dbReference type="ChEBI" id="CHEBI:57642"/>
        <dbReference type="ChEBI" id="CHEBI:59776"/>
        <dbReference type="EC" id="5.3.1.1"/>
    </reaction>
</comment>
<comment type="biophysicochemical properties">
    <kinetics>
        <KM evidence="3">2.5 uM for DHAP</KM>
        <KM evidence="2">84 uM for G3P</KM>
        <Vmax evidence="2">39.0 umol/min/mg enzyme</Vmax>
        <text evidence="3">kcat is 4.3 min(-1) for isomerase activity.</text>
    </kinetics>
    <phDependence>
        <text evidence="2">Optimum pH is 7.</text>
    </phDependence>
    <temperatureDependence>
        <text evidence="2">Optimum temperature is 37 degrees Celsius. The enzyme is stable up to 50 degrees Celsius. At 55 degrees Celsius, the enzyme retains approximately half of its activity but it is completely inactivated at 60 degrees Celsius.</text>
    </temperatureDependence>
</comment>
<comment type="pathway">
    <text evidence="1">Carbohydrate biosynthesis; gluconeogenesis.</text>
</comment>
<comment type="pathway">
    <text evidence="1">Carbohydrate degradation; glycolysis; D-glyceraldehyde 3-phosphate from glycerone phosphate: step 1/1.</text>
</comment>
<comment type="subunit">
    <text evidence="1 2 3 4">Homodimer.</text>
</comment>
<comment type="subcellular location">
    <subcellularLocation>
        <location evidence="1">Cytoplasm</location>
    </subcellularLocation>
</comment>
<comment type="mass spectrometry" mass="28213.0" method="Electrospray" evidence="2"/>
<comment type="similarity">
    <text evidence="1">Belongs to the triosephosphate isomerase family.</text>
</comment>
<accession>P9WG43</accession>
<accession>L0T6V2</accession>
<accession>O08408</accession>
<accession>P66940</accession>
<evidence type="ECO:0000255" key="1">
    <source>
        <dbReference type="HAMAP-Rule" id="MF_00147"/>
    </source>
</evidence>
<evidence type="ECO:0000269" key="2">
    <source>
    </source>
</evidence>
<evidence type="ECO:0000269" key="3">
    <source>
    </source>
</evidence>
<evidence type="ECO:0000269" key="4">
    <source>
    </source>
</evidence>
<evidence type="ECO:0000303" key="5">
    <source>
    </source>
</evidence>
<evidence type="ECO:0000303" key="6">
    <source>
    </source>
</evidence>
<evidence type="ECO:0000305" key="7">
    <source>
    </source>
</evidence>
<evidence type="ECO:0000305" key="8">
    <source>
    </source>
</evidence>
<evidence type="ECO:0007829" key="9">
    <source>
        <dbReference type="PDB" id="3TA6"/>
    </source>
</evidence>
<name>TPIS_MYCTU</name>
<keyword id="KW-0002">3D-structure</keyword>
<keyword id="KW-0963">Cytoplasm</keyword>
<keyword id="KW-0312">Gluconeogenesis</keyword>
<keyword id="KW-0324">Glycolysis</keyword>
<keyword id="KW-0413">Isomerase</keyword>
<keyword id="KW-1185">Reference proteome</keyword>
<gene>
    <name evidence="1" type="primary">tpiA</name>
    <name type="synonym">tpi</name>
    <name type="ordered locus">Rv1438</name>
    <name type="ORF">MTCY493.16c</name>
</gene>
<sequence length="261" mass="27403">MSRKPLIAGNWKMNLNHYEAIALVQKIAFSLPDKYYDRVDVAVIPPFTDLRSVQTLVDGDKLRLTYGAQDLSPHDSGAYTGDVSGAFLAKLGCSYVVVGHSERRTYHNEDDALVAAKAATALKHGLTPIVCIGEHLDVREAGNHVAHNIEQLRGSLAGLLAEQIGSVVIAYEPVWAIGTGRVASAADAQEVCAAIRKELASLASPRIADTVRVLYGGSVNAKNVGDIVAQDDVDGGLVGGASLDGEHFATLAAIAAGGPLP</sequence>
<organism>
    <name type="scientific">Mycobacterium tuberculosis (strain ATCC 25618 / H37Rv)</name>
    <dbReference type="NCBI Taxonomy" id="83332"/>
    <lineage>
        <taxon>Bacteria</taxon>
        <taxon>Bacillati</taxon>
        <taxon>Actinomycetota</taxon>
        <taxon>Actinomycetes</taxon>
        <taxon>Mycobacteriales</taxon>
        <taxon>Mycobacteriaceae</taxon>
        <taxon>Mycobacterium</taxon>
        <taxon>Mycobacterium tuberculosis complex</taxon>
    </lineage>
</organism>
<protein>
    <recommendedName>
        <fullName evidence="1 5">Triosephosphate isomerase</fullName>
        <shortName evidence="1 5">TIM</shortName>
        <shortName evidence="1 6">TPI</shortName>
        <ecNumber evidence="1 2 3">5.3.1.1</ecNumber>
    </recommendedName>
    <alternativeName>
        <fullName evidence="1">Triose-phosphate isomerase</fullName>
    </alternativeName>
</protein>
<proteinExistence type="evidence at protein level"/>